<proteinExistence type="inferred from homology"/>
<keyword id="KW-0687">Ribonucleoprotein</keyword>
<keyword id="KW-0689">Ribosomal protein</keyword>
<accession>Q6G7A3</accession>
<evidence type="ECO:0000255" key="1">
    <source>
        <dbReference type="HAMAP-Rule" id="MF_01366"/>
    </source>
</evidence>
<evidence type="ECO:0000305" key="2"/>
<gene>
    <name evidence="1" type="primary">rplM</name>
    <name type="ordered locus">SAS2109</name>
</gene>
<feature type="chain" id="PRO_0000223978" description="Large ribosomal subunit protein uL13">
    <location>
        <begin position="1"/>
        <end position="145"/>
    </location>
</feature>
<dbReference type="EMBL" id="BX571857">
    <property type="protein sequence ID" value="CAG43920.1"/>
    <property type="molecule type" value="Genomic_DNA"/>
</dbReference>
<dbReference type="RefSeq" id="WP_001250038.1">
    <property type="nucleotide sequence ID" value="NC_002953.3"/>
</dbReference>
<dbReference type="SMR" id="Q6G7A3"/>
<dbReference type="GeneID" id="98346530"/>
<dbReference type="KEGG" id="sas:SAS2109"/>
<dbReference type="HOGENOM" id="CLU_082184_2_2_9"/>
<dbReference type="GO" id="GO:0022625">
    <property type="term" value="C:cytosolic large ribosomal subunit"/>
    <property type="evidence" value="ECO:0007669"/>
    <property type="project" value="TreeGrafter"/>
</dbReference>
<dbReference type="GO" id="GO:0003729">
    <property type="term" value="F:mRNA binding"/>
    <property type="evidence" value="ECO:0007669"/>
    <property type="project" value="TreeGrafter"/>
</dbReference>
<dbReference type="GO" id="GO:0003735">
    <property type="term" value="F:structural constituent of ribosome"/>
    <property type="evidence" value="ECO:0007669"/>
    <property type="project" value="InterPro"/>
</dbReference>
<dbReference type="GO" id="GO:0017148">
    <property type="term" value="P:negative regulation of translation"/>
    <property type="evidence" value="ECO:0007669"/>
    <property type="project" value="TreeGrafter"/>
</dbReference>
<dbReference type="GO" id="GO:0006412">
    <property type="term" value="P:translation"/>
    <property type="evidence" value="ECO:0007669"/>
    <property type="project" value="UniProtKB-UniRule"/>
</dbReference>
<dbReference type="CDD" id="cd00392">
    <property type="entry name" value="Ribosomal_L13"/>
    <property type="match status" value="1"/>
</dbReference>
<dbReference type="FunFam" id="3.90.1180.10:FF:000001">
    <property type="entry name" value="50S ribosomal protein L13"/>
    <property type="match status" value="1"/>
</dbReference>
<dbReference type="Gene3D" id="3.90.1180.10">
    <property type="entry name" value="Ribosomal protein L13"/>
    <property type="match status" value="1"/>
</dbReference>
<dbReference type="HAMAP" id="MF_01366">
    <property type="entry name" value="Ribosomal_uL13"/>
    <property type="match status" value="1"/>
</dbReference>
<dbReference type="InterPro" id="IPR005822">
    <property type="entry name" value="Ribosomal_uL13"/>
</dbReference>
<dbReference type="InterPro" id="IPR005823">
    <property type="entry name" value="Ribosomal_uL13_bac-type"/>
</dbReference>
<dbReference type="InterPro" id="IPR023563">
    <property type="entry name" value="Ribosomal_uL13_CS"/>
</dbReference>
<dbReference type="InterPro" id="IPR036899">
    <property type="entry name" value="Ribosomal_uL13_sf"/>
</dbReference>
<dbReference type="NCBIfam" id="TIGR01066">
    <property type="entry name" value="rplM_bact"/>
    <property type="match status" value="1"/>
</dbReference>
<dbReference type="PANTHER" id="PTHR11545:SF2">
    <property type="entry name" value="LARGE RIBOSOMAL SUBUNIT PROTEIN UL13M"/>
    <property type="match status" value="1"/>
</dbReference>
<dbReference type="PANTHER" id="PTHR11545">
    <property type="entry name" value="RIBOSOMAL PROTEIN L13"/>
    <property type="match status" value="1"/>
</dbReference>
<dbReference type="Pfam" id="PF00572">
    <property type="entry name" value="Ribosomal_L13"/>
    <property type="match status" value="1"/>
</dbReference>
<dbReference type="PIRSF" id="PIRSF002181">
    <property type="entry name" value="Ribosomal_L13"/>
    <property type="match status" value="1"/>
</dbReference>
<dbReference type="SUPFAM" id="SSF52161">
    <property type="entry name" value="Ribosomal protein L13"/>
    <property type="match status" value="1"/>
</dbReference>
<dbReference type="PROSITE" id="PS00783">
    <property type="entry name" value="RIBOSOMAL_L13"/>
    <property type="match status" value="1"/>
</dbReference>
<name>RL13_STAAS</name>
<sequence>MRQTFMANESNIERKWYVIDAEGQTLGRLSSEVASILRGKNKVTYTPHVDTGDYVIVINASKIEFTGNKETDKVYYRHSNHPGGIKSITAGELRRTNPERLIENSIKGMLPSTRLGEKQGKKLFVYGGAEHPHAAQQPENYELRG</sequence>
<reference key="1">
    <citation type="journal article" date="2004" name="Proc. Natl. Acad. Sci. U.S.A.">
        <title>Complete genomes of two clinical Staphylococcus aureus strains: evidence for the rapid evolution of virulence and drug resistance.</title>
        <authorList>
            <person name="Holden M.T.G."/>
            <person name="Feil E.J."/>
            <person name="Lindsay J.A."/>
            <person name="Peacock S.J."/>
            <person name="Day N.P.J."/>
            <person name="Enright M.C."/>
            <person name="Foster T.J."/>
            <person name="Moore C.E."/>
            <person name="Hurst L."/>
            <person name="Atkin R."/>
            <person name="Barron A."/>
            <person name="Bason N."/>
            <person name="Bentley S.D."/>
            <person name="Chillingworth C."/>
            <person name="Chillingworth T."/>
            <person name="Churcher C."/>
            <person name="Clark L."/>
            <person name="Corton C."/>
            <person name="Cronin A."/>
            <person name="Doggett J."/>
            <person name="Dowd L."/>
            <person name="Feltwell T."/>
            <person name="Hance Z."/>
            <person name="Harris B."/>
            <person name="Hauser H."/>
            <person name="Holroyd S."/>
            <person name="Jagels K."/>
            <person name="James K.D."/>
            <person name="Lennard N."/>
            <person name="Line A."/>
            <person name="Mayes R."/>
            <person name="Moule S."/>
            <person name="Mungall K."/>
            <person name="Ormond D."/>
            <person name="Quail M.A."/>
            <person name="Rabbinowitsch E."/>
            <person name="Rutherford K.M."/>
            <person name="Sanders M."/>
            <person name="Sharp S."/>
            <person name="Simmonds M."/>
            <person name="Stevens K."/>
            <person name="Whitehead S."/>
            <person name="Barrell B.G."/>
            <person name="Spratt B.G."/>
            <person name="Parkhill J."/>
        </authorList>
    </citation>
    <scope>NUCLEOTIDE SEQUENCE [LARGE SCALE GENOMIC DNA]</scope>
    <source>
        <strain>MSSA476</strain>
    </source>
</reference>
<protein>
    <recommendedName>
        <fullName evidence="1">Large ribosomal subunit protein uL13</fullName>
    </recommendedName>
    <alternativeName>
        <fullName evidence="2">50S ribosomal protein L13</fullName>
    </alternativeName>
</protein>
<comment type="function">
    <text evidence="1">This protein is one of the early assembly proteins of the 50S ribosomal subunit, although it is not seen to bind rRNA by itself. It is important during the early stages of 50S assembly.</text>
</comment>
<comment type="subunit">
    <text evidence="1">Part of the 50S ribosomal subunit.</text>
</comment>
<comment type="similarity">
    <text evidence="1">Belongs to the universal ribosomal protein uL13 family.</text>
</comment>
<organism>
    <name type="scientific">Staphylococcus aureus (strain MSSA476)</name>
    <dbReference type="NCBI Taxonomy" id="282459"/>
    <lineage>
        <taxon>Bacteria</taxon>
        <taxon>Bacillati</taxon>
        <taxon>Bacillota</taxon>
        <taxon>Bacilli</taxon>
        <taxon>Bacillales</taxon>
        <taxon>Staphylococcaceae</taxon>
        <taxon>Staphylococcus</taxon>
    </lineage>
</organism>